<name>HEMOT_DROME</name>
<feature type="chain" id="PRO_0000436375" description="Hemotin">
    <location>
        <begin position="1"/>
        <end position="88"/>
    </location>
</feature>
<feature type="topological domain" description="Lumenal" evidence="4">
    <location>
        <begin position="1"/>
        <end position="14"/>
    </location>
</feature>
<feature type="transmembrane region" description="Helical" evidence="1">
    <location>
        <begin position="15"/>
        <end position="37"/>
    </location>
</feature>
<feature type="topological domain" description="Cytoplasmic" evidence="4">
    <location>
        <begin position="38"/>
        <end position="88"/>
    </location>
</feature>
<proteinExistence type="evidence at protein level"/>
<organism evidence="6">
    <name type="scientific">Drosophila melanogaster</name>
    <name type="common">Fruit fly</name>
    <dbReference type="NCBI Taxonomy" id="7227"/>
    <lineage>
        <taxon>Eukaryota</taxon>
        <taxon>Metazoa</taxon>
        <taxon>Ecdysozoa</taxon>
        <taxon>Arthropoda</taxon>
        <taxon>Hexapoda</taxon>
        <taxon>Insecta</taxon>
        <taxon>Pterygota</taxon>
        <taxon>Neoptera</taxon>
        <taxon>Endopterygota</taxon>
        <taxon>Diptera</taxon>
        <taxon>Brachycera</taxon>
        <taxon>Muscomorpha</taxon>
        <taxon>Ephydroidea</taxon>
        <taxon>Drosophilidae</taxon>
        <taxon>Drosophila</taxon>
        <taxon>Sophophora</taxon>
    </lineage>
</organism>
<keyword id="KW-0967">Endosome</keyword>
<keyword id="KW-0472">Membrane</keyword>
<keyword id="KW-0581">Phagocytosis</keyword>
<keyword id="KW-1185">Reference proteome</keyword>
<keyword id="KW-0812">Transmembrane</keyword>
<keyword id="KW-1133">Transmembrane helix</keyword>
<comment type="function">
    <text evidence="2">Negatively regulates early endosome maturation by binding to and repressing the activity of 14-3-3zeta which prevents the 14-3-3zeta-mediated activation of phosphoinositide 3-kinase Pi3K68D. This, in turn, inhibits the Pi3K68D-mediated conversion of phosphatidylinositol to phosphatidylinositol-3-phosphate and prevents progression of early endosomes through the maturation process which regulates subsequent steps of phagocytic processing.</text>
</comment>
<comment type="subunit">
    <text evidence="2">Interacts with 14-3-3zeta.</text>
</comment>
<comment type="subcellular location">
    <subcellularLocation>
        <location evidence="2">Early endosome membrane</location>
        <topology evidence="1">Single-pass membrane protein</topology>
    </subcellularLocation>
</comment>
<comment type="tissue specificity">
    <text evidence="2">Expressed in hemocytes.</text>
</comment>
<comment type="developmental stage">
    <text evidence="2">Expression increases from prepupal to adult stages.</text>
</comment>
<comment type="disruption phenotype">
    <text evidence="2">Mutants reach adulthood and show no overt morphological defects but their hemocytes display a more vacuolated morphology than controls with enlarged endolysosomes which accumulate undigested phagocytic material due to impaired digestion. This leads to decreased resistance to bacterial infection and severely reduced lifespan.</text>
</comment>
<sequence>MDCFKVFEVVFQSEINPLLLIPAVATIALTLCCYCYHGYQWIRDRRTARIEEQQAQLPLPLSRISITPGCSMVATTKLTHSRNSVDIY</sequence>
<protein>
    <recommendedName>
        <fullName evidence="3">Hemotin</fullName>
    </recommendedName>
</protein>
<dbReference type="EMBL" id="AE014297">
    <property type="protein sequence ID" value="AFH06498.1"/>
    <property type="molecule type" value="Genomic_DNA"/>
</dbReference>
<dbReference type="EMBL" id="AE014297">
    <property type="protein sequence ID" value="AHN57392.1"/>
    <property type="molecule type" value="Genomic_DNA"/>
</dbReference>
<dbReference type="RefSeq" id="NP_001247180.1">
    <property type="nucleotide sequence ID" value="NM_001260251.2"/>
</dbReference>
<dbReference type="RefSeq" id="NP_001287393.1">
    <property type="nucleotide sequence ID" value="NM_001300464.1"/>
</dbReference>
<dbReference type="STRING" id="7227.FBpp0312141"/>
<dbReference type="GlyGen" id="A0A0B4K753">
    <property type="glycosylation" value="1 site"/>
</dbReference>
<dbReference type="PaxDb" id="7227-FBpp0297277"/>
<dbReference type="EnsemblMetazoa" id="FBtr0306140">
    <property type="protein sequence ID" value="FBpp0297277"/>
    <property type="gene ID" value="FBgn0262823"/>
</dbReference>
<dbReference type="EnsemblMetazoa" id="FBtr0346523">
    <property type="protein sequence ID" value="FBpp0312141"/>
    <property type="gene ID" value="FBgn0262823"/>
</dbReference>
<dbReference type="GeneID" id="12798465"/>
<dbReference type="KEGG" id="dme:Dmel_CG43194"/>
<dbReference type="AGR" id="FB:FBgn0262823"/>
<dbReference type="CTD" id="12798465"/>
<dbReference type="FlyBase" id="FBgn0262823">
    <property type="gene designation" value="hemo"/>
</dbReference>
<dbReference type="VEuPathDB" id="VectorBase:FBgn0262823"/>
<dbReference type="InParanoid" id="A0A0B4K753"/>
<dbReference type="OMA" id="CPHIINT"/>
<dbReference type="OrthoDB" id="7846442at2759"/>
<dbReference type="PhylomeDB" id="A0A0B4K753"/>
<dbReference type="BioGRID-ORCS" id="12798465">
    <property type="hits" value="0 hits in 1 CRISPR screen"/>
</dbReference>
<dbReference type="PRO" id="PR:A0A0B4K753"/>
<dbReference type="Proteomes" id="UP000000803">
    <property type="component" value="Chromosome 3R"/>
</dbReference>
<dbReference type="Bgee" id="FBgn0262823">
    <property type="expression patterns" value="Expressed in embryonic hemocyte (Drosophila) and 5 other cell types or tissues"/>
</dbReference>
<dbReference type="GO" id="GO:0031901">
    <property type="term" value="C:early endosome membrane"/>
    <property type="evidence" value="ECO:0000314"/>
    <property type="project" value="UniProtKB"/>
</dbReference>
<dbReference type="GO" id="GO:0006909">
    <property type="term" value="P:phagocytosis"/>
    <property type="evidence" value="ECO:0000315"/>
    <property type="project" value="FlyBase"/>
</dbReference>
<dbReference type="GO" id="GO:1900426">
    <property type="term" value="P:positive regulation of defense response to bacterium"/>
    <property type="evidence" value="ECO:0000315"/>
    <property type="project" value="UniProtKB"/>
</dbReference>
<dbReference type="GO" id="GO:1904980">
    <property type="term" value="P:positive regulation of endosome organization"/>
    <property type="evidence" value="ECO:0000315"/>
    <property type="project" value="UniProtKB"/>
</dbReference>
<dbReference type="GO" id="GO:0050766">
    <property type="term" value="P:positive regulation of phagocytosis"/>
    <property type="evidence" value="ECO:0000315"/>
    <property type="project" value="UniProtKB"/>
</dbReference>
<dbReference type="CDD" id="cd20249">
    <property type="entry name" value="Hemotin"/>
    <property type="match status" value="1"/>
</dbReference>
<dbReference type="InterPro" id="IPR047851">
    <property type="entry name" value="Hemotin"/>
</dbReference>
<dbReference type="Pfam" id="PF21944">
    <property type="entry name" value="Hemotin"/>
    <property type="match status" value="1"/>
</dbReference>
<gene>
    <name evidence="3" type="primary">hemo</name>
    <name evidence="5" type="ORF">CG43194</name>
</gene>
<accession>A0A0B4K753</accession>
<reference evidence="6" key="1">
    <citation type="journal article" date="2000" name="Science">
        <title>The genome sequence of Drosophila melanogaster.</title>
        <authorList>
            <person name="Adams M.D."/>
            <person name="Celniker S.E."/>
            <person name="Holt R.A."/>
            <person name="Evans C.A."/>
            <person name="Gocayne J.D."/>
            <person name="Amanatides P.G."/>
            <person name="Scherer S.E."/>
            <person name="Li P.W."/>
            <person name="Hoskins R.A."/>
            <person name="Galle R.F."/>
            <person name="George R.A."/>
            <person name="Lewis S.E."/>
            <person name="Richards S."/>
            <person name="Ashburner M."/>
            <person name="Henderson S.N."/>
            <person name="Sutton G.G."/>
            <person name="Wortman J.R."/>
            <person name="Yandell M.D."/>
            <person name="Zhang Q."/>
            <person name="Chen L.X."/>
            <person name="Brandon R.C."/>
            <person name="Rogers Y.-H.C."/>
            <person name="Blazej R.G."/>
            <person name="Champe M."/>
            <person name="Pfeiffer B.D."/>
            <person name="Wan K.H."/>
            <person name="Doyle C."/>
            <person name="Baxter E.G."/>
            <person name="Helt G."/>
            <person name="Nelson C.R."/>
            <person name="Miklos G.L.G."/>
            <person name="Abril J.F."/>
            <person name="Agbayani A."/>
            <person name="An H.-J."/>
            <person name="Andrews-Pfannkoch C."/>
            <person name="Baldwin D."/>
            <person name="Ballew R.M."/>
            <person name="Basu A."/>
            <person name="Baxendale J."/>
            <person name="Bayraktaroglu L."/>
            <person name="Beasley E.M."/>
            <person name="Beeson K.Y."/>
            <person name="Benos P.V."/>
            <person name="Berman B.P."/>
            <person name="Bhandari D."/>
            <person name="Bolshakov S."/>
            <person name="Borkova D."/>
            <person name="Botchan M.R."/>
            <person name="Bouck J."/>
            <person name="Brokstein P."/>
            <person name="Brottier P."/>
            <person name="Burtis K.C."/>
            <person name="Busam D.A."/>
            <person name="Butler H."/>
            <person name="Cadieu E."/>
            <person name="Center A."/>
            <person name="Chandra I."/>
            <person name="Cherry J.M."/>
            <person name="Cawley S."/>
            <person name="Dahlke C."/>
            <person name="Davenport L.B."/>
            <person name="Davies P."/>
            <person name="de Pablos B."/>
            <person name="Delcher A."/>
            <person name="Deng Z."/>
            <person name="Mays A.D."/>
            <person name="Dew I."/>
            <person name="Dietz S.M."/>
            <person name="Dodson K."/>
            <person name="Doup L.E."/>
            <person name="Downes M."/>
            <person name="Dugan-Rocha S."/>
            <person name="Dunkov B.C."/>
            <person name="Dunn P."/>
            <person name="Durbin K.J."/>
            <person name="Evangelista C.C."/>
            <person name="Ferraz C."/>
            <person name="Ferriera S."/>
            <person name="Fleischmann W."/>
            <person name="Fosler C."/>
            <person name="Gabrielian A.E."/>
            <person name="Garg N.S."/>
            <person name="Gelbart W.M."/>
            <person name="Glasser K."/>
            <person name="Glodek A."/>
            <person name="Gong F."/>
            <person name="Gorrell J.H."/>
            <person name="Gu Z."/>
            <person name="Guan P."/>
            <person name="Harris M."/>
            <person name="Harris N.L."/>
            <person name="Harvey D.A."/>
            <person name="Heiman T.J."/>
            <person name="Hernandez J.R."/>
            <person name="Houck J."/>
            <person name="Hostin D."/>
            <person name="Houston K.A."/>
            <person name="Howland T.J."/>
            <person name="Wei M.-H."/>
            <person name="Ibegwam C."/>
            <person name="Jalali M."/>
            <person name="Kalush F."/>
            <person name="Karpen G.H."/>
            <person name="Ke Z."/>
            <person name="Kennison J.A."/>
            <person name="Ketchum K.A."/>
            <person name="Kimmel B.E."/>
            <person name="Kodira C.D."/>
            <person name="Kraft C.L."/>
            <person name="Kravitz S."/>
            <person name="Kulp D."/>
            <person name="Lai Z."/>
            <person name="Lasko P."/>
            <person name="Lei Y."/>
            <person name="Levitsky A.A."/>
            <person name="Li J.H."/>
            <person name="Li Z."/>
            <person name="Liang Y."/>
            <person name="Lin X."/>
            <person name="Liu X."/>
            <person name="Mattei B."/>
            <person name="McIntosh T.C."/>
            <person name="McLeod M.P."/>
            <person name="McPherson D."/>
            <person name="Merkulov G."/>
            <person name="Milshina N.V."/>
            <person name="Mobarry C."/>
            <person name="Morris J."/>
            <person name="Moshrefi A."/>
            <person name="Mount S.M."/>
            <person name="Moy M."/>
            <person name="Murphy B."/>
            <person name="Murphy L."/>
            <person name="Muzny D.M."/>
            <person name="Nelson D.L."/>
            <person name="Nelson D.R."/>
            <person name="Nelson K.A."/>
            <person name="Nixon K."/>
            <person name="Nusskern D.R."/>
            <person name="Pacleb J.M."/>
            <person name="Palazzolo M."/>
            <person name="Pittman G.S."/>
            <person name="Pan S."/>
            <person name="Pollard J."/>
            <person name="Puri V."/>
            <person name="Reese M.G."/>
            <person name="Reinert K."/>
            <person name="Remington K."/>
            <person name="Saunders R.D.C."/>
            <person name="Scheeler F."/>
            <person name="Shen H."/>
            <person name="Shue B.C."/>
            <person name="Siden-Kiamos I."/>
            <person name="Simpson M."/>
            <person name="Skupski M.P."/>
            <person name="Smith T.J."/>
            <person name="Spier E."/>
            <person name="Spradling A.C."/>
            <person name="Stapleton M."/>
            <person name="Strong R."/>
            <person name="Sun E."/>
            <person name="Svirskas R."/>
            <person name="Tector C."/>
            <person name="Turner R."/>
            <person name="Venter E."/>
            <person name="Wang A.H."/>
            <person name="Wang X."/>
            <person name="Wang Z.-Y."/>
            <person name="Wassarman D.A."/>
            <person name="Weinstock G.M."/>
            <person name="Weissenbach J."/>
            <person name="Williams S.M."/>
            <person name="Woodage T."/>
            <person name="Worley K.C."/>
            <person name="Wu D."/>
            <person name="Yang S."/>
            <person name="Yao Q.A."/>
            <person name="Ye J."/>
            <person name="Yeh R.-F."/>
            <person name="Zaveri J.S."/>
            <person name="Zhan M."/>
            <person name="Zhang G."/>
            <person name="Zhao Q."/>
            <person name="Zheng L."/>
            <person name="Zheng X.H."/>
            <person name="Zhong F.N."/>
            <person name="Zhong W."/>
            <person name="Zhou X."/>
            <person name="Zhu S.C."/>
            <person name="Zhu X."/>
            <person name="Smith H.O."/>
            <person name="Gibbs R.A."/>
            <person name="Myers E.W."/>
            <person name="Rubin G.M."/>
            <person name="Venter J.C."/>
        </authorList>
    </citation>
    <scope>NUCLEOTIDE SEQUENCE [LARGE SCALE GENOMIC DNA]</scope>
    <source>
        <strain evidence="6">Berkeley</strain>
    </source>
</reference>
<reference evidence="6" key="2">
    <citation type="journal article" date="2002" name="Genome Biol.">
        <title>Annotation of the Drosophila melanogaster euchromatic genome: a systematic review.</title>
        <authorList>
            <person name="Misra S."/>
            <person name="Crosby M.A."/>
            <person name="Mungall C.J."/>
            <person name="Matthews B.B."/>
            <person name="Campbell K.S."/>
            <person name="Hradecky P."/>
            <person name="Huang Y."/>
            <person name="Kaminker J.S."/>
            <person name="Millburn G.H."/>
            <person name="Prochnik S.E."/>
            <person name="Smith C.D."/>
            <person name="Tupy J.L."/>
            <person name="Whitfield E.J."/>
            <person name="Bayraktaroglu L."/>
            <person name="Berman B.P."/>
            <person name="Bettencourt B.R."/>
            <person name="Celniker S.E."/>
            <person name="de Grey A.D.N.J."/>
            <person name="Drysdale R.A."/>
            <person name="Harris N.L."/>
            <person name="Richter J."/>
            <person name="Russo S."/>
            <person name="Schroeder A.J."/>
            <person name="Shu S.Q."/>
            <person name="Stapleton M."/>
            <person name="Yamada C."/>
            <person name="Ashburner M."/>
            <person name="Gelbart W.M."/>
            <person name="Rubin G.M."/>
            <person name="Lewis S.E."/>
        </authorList>
    </citation>
    <scope>GENOME REANNOTATION</scope>
    <source>
        <strain evidence="6">Berkeley</strain>
    </source>
</reference>
<reference evidence="4" key="3">
    <citation type="journal article" date="2016" name="PLoS Biol.">
        <title>Hemotin, a regulator of phagocytosis encoded by a small ORF and conserved across metazoans.</title>
        <authorList>
            <person name="Pueyo J.I."/>
            <person name="Magny E.G."/>
            <person name="Sampson C.J."/>
            <person name="Amin U."/>
            <person name="Evans I.R."/>
            <person name="Bishop S.A."/>
            <person name="Couso J.P."/>
        </authorList>
    </citation>
    <scope>FUNCTION</scope>
    <scope>INTERACTION WITH 14-3-3ZETA</scope>
    <scope>SUBCELLULAR LOCATION</scope>
    <scope>TISSUE SPECIFICITY</scope>
    <scope>DEVELOPMENTAL STAGE</scope>
    <scope>DISRUPTION PHENOTYPE</scope>
</reference>
<evidence type="ECO:0000255" key="1"/>
<evidence type="ECO:0000269" key="2">
    <source>
    </source>
</evidence>
<evidence type="ECO:0000303" key="3">
    <source>
    </source>
</evidence>
<evidence type="ECO:0000305" key="4"/>
<evidence type="ECO:0000312" key="5">
    <source>
        <dbReference type="FlyBase" id="FBgn0262823"/>
    </source>
</evidence>
<evidence type="ECO:0000312" key="6">
    <source>
        <dbReference type="Proteomes" id="UP000000803"/>
    </source>
</evidence>